<reference key="1">
    <citation type="journal article" date="2008" name="J. Bacteriol.">
        <title>Complete genome sequence of the mosquitocidal bacterium Bacillus sphaericus C3-41 and comparison with those of closely related Bacillus species.</title>
        <authorList>
            <person name="Hu X."/>
            <person name="Fan W."/>
            <person name="Han B."/>
            <person name="Liu H."/>
            <person name="Zheng D."/>
            <person name="Li Q."/>
            <person name="Dong W."/>
            <person name="Yan J."/>
            <person name="Gao M."/>
            <person name="Berry C."/>
            <person name="Yuan Z."/>
        </authorList>
    </citation>
    <scope>NUCLEOTIDE SEQUENCE [LARGE SCALE GENOMIC DNA]</scope>
    <source>
        <strain>C3-41</strain>
    </source>
</reference>
<sequence length="259" mass="28947">MNLLEKTRKINSMLQASAGKPVNFKEMADTLGDIIDSNVYILSRKGKLLGISIHQQIENERMKKMFEERQFPEEYTHSLFTISETSSNLDIHNEHTAFPVENKDLFQNALTTIVPIVGGGERLGTLILARLSSQFEDDDLILAEYGATVVGMEILREKSEEIEEEARSKAVVQMAINSLSYSELEAIEHIFEELDGNEGLLVASKIADRVGITRSVIVNALRKLESAGVIESRSLGMKGTYIKVLNDKFLNALAEIKMK</sequence>
<gene>
    <name evidence="1" type="primary">codY</name>
    <name type="ordered locus">Bsph_1546</name>
</gene>
<protein>
    <recommendedName>
        <fullName evidence="1">Global transcriptional regulator CodY</fullName>
    </recommendedName>
</protein>
<evidence type="ECO:0000255" key="1">
    <source>
        <dbReference type="HAMAP-Rule" id="MF_00621"/>
    </source>
</evidence>
<organism>
    <name type="scientific">Lysinibacillus sphaericus (strain C3-41)</name>
    <dbReference type="NCBI Taxonomy" id="444177"/>
    <lineage>
        <taxon>Bacteria</taxon>
        <taxon>Bacillati</taxon>
        <taxon>Bacillota</taxon>
        <taxon>Bacilli</taxon>
        <taxon>Bacillales</taxon>
        <taxon>Bacillaceae</taxon>
        <taxon>Lysinibacillus</taxon>
    </lineage>
</organism>
<keyword id="KW-0963">Cytoplasm</keyword>
<keyword id="KW-0238">DNA-binding</keyword>
<keyword id="KW-0597">Phosphoprotein</keyword>
<keyword id="KW-0678">Repressor</keyword>
<keyword id="KW-0804">Transcription</keyword>
<keyword id="KW-0805">Transcription regulation</keyword>
<name>CODY_LYSSC</name>
<accession>B1HQV3</accession>
<feature type="chain" id="PRO_1000130456" description="Global transcriptional regulator CodY">
    <location>
        <begin position="1"/>
        <end position="259"/>
    </location>
</feature>
<feature type="DNA-binding region" description="H-T-H motif" evidence="1">
    <location>
        <begin position="203"/>
        <end position="222"/>
    </location>
</feature>
<feature type="region of interest" description="GAF domain" evidence="1">
    <location>
        <begin position="1"/>
        <end position="155"/>
    </location>
</feature>
<feature type="modified residue" description="Phosphoserine" evidence="1">
    <location>
        <position position="215"/>
    </location>
</feature>
<dbReference type="EMBL" id="CP000817">
    <property type="protein sequence ID" value="ACA39144.1"/>
    <property type="molecule type" value="Genomic_DNA"/>
</dbReference>
<dbReference type="RefSeq" id="WP_012293257.1">
    <property type="nucleotide sequence ID" value="NC_010382.1"/>
</dbReference>
<dbReference type="SMR" id="B1HQV3"/>
<dbReference type="EnsemblBacteria" id="ACA39144">
    <property type="protein sequence ID" value="ACA39144"/>
    <property type="gene ID" value="Bsph_1546"/>
</dbReference>
<dbReference type="KEGG" id="lsp:Bsph_1546"/>
<dbReference type="HOGENOM" id="CLU_089581_0_0_9"/>
<dbReference type="Proteomes" id="UP000002164">
    <property type="component" value="Chromosome"/>
</dbReference>
<dbReference type="GO" id="GO:0005737">
    <property type="term" value="C:cytoplasm"/>
    <property type="evidence" value="ECO:0007669"/>
    <property type="project" value="UniProtKB-SubCell"/>
</dbReference>
<dbReference type="GO" id="GO:0003677">
    <property type="term" value="F:DNA binding"/>
    <property type="evidence" value="ECO:0007669"/>
    <property type="project" value="UniProtKB-UniRule"/>
</dbReference>
<dbReference type="GO" id="GO:0003700">
    <property type="term" value="F:DNA-binding transcription factor activity"/>
    <property type="evidence" value="ECO:0007669"/>
    <property type="project" value="InterPro"/>
</dbReference>
<dbReference type="GO" id="GO:0005525">
    <property type="term" value="F:GTP binding"/>
    <property type="evidence" value="ECO:0007669"/>
    <property type="project" value="InterPro"/>
</dbReference>
<dbReference type="GO" id="GO:0045892">
    <property type="term" value="P:negative regulation of DNA-templated transcription"/>
    <property type="evidence" value="ECO:0007669"/>
    <property type="project" value="UniProtKB-UniRule"/>
</dbReference>
<dbReference type="FunFam" id="1.10.10.10:FF:000034">
    <property type="entry name" value="GTP-sensing transcriptional pleiotropic repressor CodY"/>
    <property type="match status" value="1"/>
</dbReference>
<dbReference type="FunFam" id="3.30.450.40:FF:000003">
    <property type="entry name" value="GTP-sensing transcriptional pleiotropic repressor CodY"/>
    <property type="match status" value="1"/>
</dbReference>
<dbReference type="Gene3D" id="3.30.450.40">
    <property type="match status" value="1"/>
</dbReference>
<dbReference type="Gene3D" id="1.10.10.10">
    <property type="entry name" value="Winged helix-like DNA-binding domain superfamily/Winged helix DNA-binding domain"/>
    <property type="match status" value="1"/>
</dbReference>
<dbReference type="HAMAP" id="MF_00621">
    <property type="entry name" value="HTH_type_CodY"/>
    <property type="match status" value="1"/>
</dbReference>
<dbReference type="InterPro" id="IPR014154">
    <property type="entry name" value="CodY"/>
</dbReference>
<dbReference type="InterPro" id="IPR029016">
    <property type="entry name" value="GAF-like_dom_sf"/>
</dbReference>
<dbReference type="InterPro" id="IPR013198">
    <property type="entry name" value="GTP_trans_reg_CodY_C"/>
</dbReference>
<dbReference type="InterPro" id="IPR010312">
    <property type="entry name" value="Transc_reg_CodY_N"/>
</dbReference>
<dbReference type="InterPro" id="IPR036388">
    <property type="entry name" value="WH-like_DNA-bd_sf"/>
</dbReference>
<dbReference type="InterPro" id="IPR036390">
    <property type="entry name" value="WH_DNA-bd_sf"/>
</dbReference>
<dbReference type="NCBIfam" id="TIGR02787">
    <property type="entry name" value="codY_Gpos"/>
    <property type="match status" value="1"/>
</dbReference>
<dbReference type="NCBIfam" id="NF003170">
    <property type="entry name" value="PRK04158.1"/>
    <property type="match status" value="1"/>
</dbReference>
<dbReference type="PANTHER" id="PTHR40062:SF1">
    <property type="entry name" value="GLOBAL TRANSCRIPTIONAL REGULATOR CODY"/>
    <property type="match status" value="1"/>
</dbReference>
<dbReference type="PANTHER" id="PTHR40062">
    <property type="entry name" value="GTP-SENSING TRANSCRIPTIONAL PLEIOTROPIC REPRESSOR CODY"/>
    <property type="match status" value="1"/>
</dbReference>
<dbReference type="Pfam" id="PF06018">
    <property type="entry name" value="CodY"/>
    <property type="match status" value="1"/>
</dbReference>
<dbReference type="Pfam" id="PF08222">
    <property type="entry name" value="HTH_CodY"/>
    <property type="match status" value="1"/>
</dbReference>
<dbReference type="PIRSF" id="PIRSF011572">
    <property type="entry name" value="GTP_sensing_CodY"/>
    <property type="match status" value="1"/>
</dbReference>
<dbReference type="SUPFAM" id="SSF46785">
    <property type="entry name" value="Winged helix' DNA-binding domain"/>
    <property type="match status" value="1"/>
</dbReference>
<comment type="function">
    <text evidence="1">DNA-binding global transcriptional regulator which is involved in the adaptive response to starvation and acts by directly or indirectly controlling the expression of numerous genes in response to nutrient availability. During rapid exponential growth, CodY is highly active and represses genes whose products allow adaptation to nutrient depletion.</text>
</comment>
<comment type="subcellular location">
    <subcellularLocation>
        <location evidence="1">Cytoplasm</location>
    </subcellularLocation>
</comment>
<comment type="similarity">
    <text evidence="1">Belongs to the CodY family.</text>
</comment>
<proteinExistence type="inferred from homology"/>